<organism>
    <name type="scientific">Mus musculus</name>
    <name type="common">Mouse</name>
    <dbReference type="NCBI Taxonomy" id="10090"/>
    <lineage>
        <taxon>Eukaryota</taxon>
        <taxon>Metazoa</taxon>
        <taxon>Chordata</taxon>
        <taxon>Craniata</taxon>
        <taxon>Vertebrata</taxon>
        <taxon>Euteleostomi</taxon>
        <taxon>Mammalia</taxon>
        <taxon>Eutheria</taxon>
        <taxon>Euarchontoglires</taxon>
        <taxon>Glires</taxon>
        <taxon>Rodentia</taxon>
        <taxon>Myomorpha</taxon>
        <taxon>Muroidea</taxon>
        <taxon>Muridae</taxon>
        <taxon>Murinae</taxon>
        <taxon>Mus</taxon>
        <taxon>Mus</taxon>
    </lineage>
</organism>
<keyword id="KW-1185">Reference proteome</keyword>
<keyword id="KW-0677">Repeat</keyword>
<keyword id="KW-0853">WD repeat</keyword>
<reference key="1">
    <citation type="journal article" date="2005" name="Science">
        <title>The transcriptional landscape of the mammalian genome.</title>
        <authorList>
            <person name="Carninci P."/>
            <person name="Kasukawa T."/>
            <person name="Katayama S."/>
            <person name="Gough J."/>
            <person name="Frith M.C."/>
            <person name="Maeda N."/>
            <person name="Oyama R."/>
            <person name="Ravasi T."/>
            <person name="Lenhard B."/>
            <person name="Wells C."/>
            <person name="Kodzius R."/>
            <person name="Shimokawa K."/>
            <person name="Bajic V.B."/>
            <person name="Brenner S.E."/>
            <person name="Batalov S."/>
            <person name="Forrest A.R."/>
            <person name="Zavolan M."/>
            <person name="Davis M.J."/>
            <person name="Wilming L.G."/>
            <person name="Aidinis V."/>
            <person name="Allen J.E."/>
            <person name="Ambesi-Impiombato A."/>
            <person name="Apweiler R."/>
            <person name="Aturaliya R.N."/>
            <person name="Bailey T.L."/>
            <person name="Bansal M."/>
            <person name="Baxter L."/>
            <person name="Beisel K.W."/>
            <person name="Bersano T."/>
            <person name="Bono H."/>
            <person name="Chalk A.M."/>
            <person name="Chiu K.P."/>
            <person name="Choudhary V."/>
            <person name="Christoffels A."/>
            <person name="Clutterbuck D.R."/>
            <person name="Crowe M.L."/>
            <person name="Dalla E."/>
            <person name="Dalrymple B.P."/>
            <person name="de Bono B."/>
            <person name="Della Gatta G."/>
            <person name="di Bernardo D."/>
            <person name="Down T."/>
            <person name="Engstrom P."/>
            <person name="Fagiolini M."/>
            <person name="Faulkner G."/>
            <person name="Fletcher C.F."/>
            <person name="Fukushima T."/>
            <person name="Furuno M."/>
            <person name="Futaki S."/>
            <person name="Gariboldi M."/>
            <person name="Georgii-Hemming P."/>
            <person name="Gingeras T.R."/>
            <person name="Gojobori T."/>
            <person name="Green R.E."/>
            <person name="Gustincich S."/>
            <person name="Harbers M."/>
            <person name="Hayashi Y."/>
            <person name="Hensch T.K."/>
            <person name="Hirokawa N."/>
            <person name="Hill D."/>
            <person name="Huminiecki L."/>
            <person name="Iacono M."/>
            <person name="Ikeo K."/>
            <person name="Iwama A."/>
            <person name="Ishikawa T."/>
            <person name="Jakt M."/>
            <person name="Kanapin A."/>
            <person name="Katoh M."/>
            <person name="Kawasawa Y."/>
            <person name="Kelso J."/>
            <person name="Kitamura H."/>
            <person name="Kitano H."/>
            <person name="Kollias G."/>
            <person name="Krishnan S.P."/>
            <person name="Kruger A."/>
            <person name="Kummerfeld S.K."/>
            <person name="Kurochkin I.V."/>
            <person name="Lareau L.F."/>
            <person name="Lazarevic D."/>
            <person name="Lipovich L."/>
            <person name="Liu J."/>
            <person name="Liuni S."/>
            <person name="McWilliam S."/>
            <person name="Madan Babu M."/>
            <person name="Madera M."/>
            <person name="Marchionni L."/>
            <person name="Matsuda H."/>
            <person name="Matsuzawa S."/>
            <person name="Miki H."/>
            <person name="Mignone F."/>
            <person name="Miyake S."/>
            <person name="Morris K."/>
            <person name="Mottagui-Tabar S."/>
            <person name="Mulder N."/>
            <person name="Nakano N."/>
            <person name="Nakauchi H."/>
            <person name="Ng P."/>
            <person name="Nilsson R."/>
            <person name="Nishiguchi S."/>
            <person name="Nishikawa S."/>
            <person name="Nori F."/>
            <person name="Ohara O."/>
            <person name="Okazaki Y."/>
            <person name="Orlando V."/>
            <person name="Pang K.C."/>
            <person name="Pavan W.J."/>
            <person name="Pavesi G."/>
            <person name="Pesole G."/>
            <person name="Petrovsky N."/>
            <person name="Piazza S."/>
            <person name="Reed J."/>
            <person name="Reid J.F."/>
            <person name="Ring B.Z."/>
            <person name="Ringwald M."/>
            <person name="Rost B."/>
            <person name="Ruan Y."/>
            <person name="Salzberg S.L."/>
            <person name="Sandelin A."/>
            <person name="Schneider C."/>
            <person name="Schoenbach C."/>
            <person name="Sekiguchi K."/>
            <person name="Semple C.A."/>
            <person name="Seno S."/>
            <person name="Sessa L."/>
            <person name="Sheng Y."/>
            <person name="Shibata Y."/>
            <person name="Shimada H."/>
            <person name="Shimada K."/>
            <person name="Silva D."/>
            <person name="Sinclair B."/>
            <person name="Sperling S."/>
            <person name="Stupka E."/>
            <person name="Sugiura K."/>
            <person name="Sultana R."/>
            <person name="Takenaka Y."/>
            <person name="Taki K."/>
            <person name="Tammoja K."/>
            <person name="Tan S.L."/>
            <person name="Tang S."/>
            <person name="Taylor M.S."/>
            <person name="Tegner J."/>
            <person name="Teichmann S.A."/>
            <person name="Ueda H.R."/>
            <person name="van Nimwegen E."/>
            <person name="Verardo R."/>
            <person name="Wei C.L."/>
            <person name="Yagi K."/>
            <person name="Yamanishi H."/>
            <person name="Zabarovsky E."/>
            <person name="Zhu S."/>
            <person name="Zimmer A."/>
            <person name="Hide W."/>
            <person name="Bult C."/>
            <person name="Grimmond S.M."/>
            <person name="Teasdale R.D."/>
            <person name="Liu E.T."/>
            <person name="Brusic V."/>
            <person name="Quackenbush J."/>
            <person name="Wahlestedt C."/>
            <person name="Mattick J.S."/>
            <person name="Hume D.A."/>
            <person name="Kai C."/>
            <person name="Sasaki D."/>
            <person name="Tomaru Y."/>
            <person name="Fukuda S."/>
            <person name="Kanamori-Katayama M."/>
            <person name="Suzuki M."/>
            <person name="Aoki J."/>
            <person name="Arakawa T."/>
            <person name="Iida J."/>
            <person name="Imamura K."/>
            <person name="Itoh M."/>
            <person name="Kato T."/>
            <person name="Kawaji H."/>
            <person name="Kawagashira N."/>
            <person name="Kawashima T."/>
            <person name="Kojima M."/>
            <person name="Kondo S."/>
            <person name="Konno H."/>
            <person name="Nakano K."/>
            <person name="Ninomiya N."/>
            <person name="Nishio T."/>
            <person name="Okada M."/>
            <person name="Plessy C."/>
            <person name="Shibata K."/>
            <person name="Shiraki T."/>
            <person name="Suzuki S."/>
            <person name="Tagami M."/>
            <person name="Waki K."/>
            <person name="Watahiki A."/>
            <person name="Okamura-Oho Y."/>
            <person name="Suzuki H."/>
            <person name="Kawai J."/>
            <person name="Hayashizaki Y."/>
        </authorList>
    </citation>
    <scope>NUCLEOTIDE SEQUENCE [LARGE SCALE MRNA]</scope>
    <source>
        <strain>C57BL/6J</strain>
        <tissue>Testis</tissue>
        <tissue>Thymus</tissue>
    </source>
</reference>
<sequence>METPPEMPSTDGHTRAIVTERYVVESKKSAAHVPLACSTQHCAFPLDGSRLCVWSSKDPSHQLLTLQGHHQLITAVVFGNQIDPLLLCSASEDYIIMWNVAECREKTLKGLTPRGTILGSLLQTVLCLRFSLDDRAIAVCAGNKISVMDVEKQSVLVELKGHQGSVTAVEFCPWQAHTLISVSEDRSFKVWDFCVGSLIYSSSILTAYPLLNLLINEENQQLVTGSADGQLWIFSLMEGHHYHCVAHVDVRKKRETFTTRRMMAEQCSLPEDHQCRCRHEADKRGEAEATFPILSLAPCDLCLPDSQRGAFASECTKCLWIGSSTALFILNLASFELEAALHFKEFQSLSVQVAGSCAMVSEPMSAKAFCMLSSMFGSKIAVLEIDLAALLSTQQYPRAGKVLSVLASSCVLPTSPLYFGIIKEKFPKLANTKQHAVKSVVEDRPLVFHTKVRSSGYTLAPHMAMFSPKTNIKHHNKRSSKYKNNYKCKECSLENFLPRNLSRQVAVAQKPVAVSCLQFSGDGQKLACGLGNHLSLVFNASLSGPPAAFSGHDGAVSTICWSHDKRWLLSTGRDRTLRVWSVHRTELMLLLAPDAFPKPVTSAQFYYMDTFILLSSGPEFCLLKYHIDLCRDDIRRYKPKSRYKPIFRLPMTSGADITSLSAVNDFYSHIVLTAGRDRAVEVFDLNAGCSAAVLAEVHSRPVHRICQNKGSSFVAQHSLAYNLFLTAAVGDGIRLWDLRNLRLMCMKWAPAAFCTVLQDTQIRLLKWPSTQQLLSLSQPP</sequence>
<comment type="sequence caution" evidence="1">
    <conflict type="erroneous initiation">
        <sequence resource="EMBL-CDS" id="BAC30513"/>
    </conflict>
</comment>
<comment type="sequence caution" evidence="1">
    <conflict type="frameshift">
        <sequence resource="EMBL-CDS" id="BAC36582"/>
    </conflict>
</comment>
<evidence type="ECO:0000305" key="1"/>
<gene>
    <name type="primary">Wdr27</name>
</gene>
<dbReference type="EMBL" id="AK040117">
    <property type="protein sequence ID" value="BAC30513.1"/>
    <property type="status" value="ALT_INIT"/>
    <property type="molecule type" value="mRNA"/>
</dbReference>
<dbReference type="EMBL" id="AK077050">
    <property type="protein sequence ID" value="BAC36582.1"/>
    <property type="status" value="ALT_FRAME"/>
    <property type="molecule type" value="mRNA"/>
</dbReference>
<dbReference type="CCDS" id="CCDS37443.1"/>
<dbReference type="RefSeq" id="NP_780382.2">
    <property type="nucleotide sequence ID" value="NM_175173.3"/>
</dbReference>
<dbReference type="FunCoup" id="Q8C5V5">
    <property type="interactions" value="836"/>
</dbReference>
<dbReference type="STRING" id="10090.ENSMUSP00000153717"/>
<dbReference type="PhosphoSitePlus" id="Q8C5V5"/>
<dbReference type="PaxDb" id="10090-ENSMUSP00000126736"/>
<dbReference type="ProteomicsDB" id="297641"/>
<dbReference type="Ensembl" id="ENSMUST00000170386.2">
    <property type="protein sequence ID" value="ENSMUSP00000126736.2"/>
    <property type="gene ID" value="ENSMUSG00000046991.13"/>
</dbReference>
<dbReference type="Ensembl" id="ENSMUST00000228330.2">
    <property type="protein sequence ID" value="ENSMUSP00000153717.2"/>
    <property type="gene ID" value="ENSMUSG00000046991.13"/>
</dbReference>
<dbReference type="GeneID" id="71682"/>
<dbReference type="KEGG" id="mmu:71682"/>
<dbReference type="UCSC" id="uc008anc.1">
    <property type="organism name" value="mouse"/>
</dbReference>
<dbReference type="AGR" id="MGI:1918932"/>
<dbReference type="CTD" id="253769"/>
<dbReference type="MGI" id="MGI:1918932">
    <property type="gene designation" value="Wdr27"/>
</dbReference>
<dbReference type="VEuPathDB" id="HostDB:ENSMUSG00000046991"/>
<dbReference type="eggNOG" id="KOG0266">
    <property type="taxonomic scope" value="Eukaryota"/>
</dbReference>
<dbReference type="GeneTree" id="ENSGT00390000012017"/>
<dbReference type="HOGENOM" id="CLU_018295_0_0_1"/>
<dbReference type="InParanoid" id="Q8C5V5"/>
<dbReference type="OrthoDB" id="20669at2759"/>
<dbReference type="PhylomeDB" id="Q8C5V5"/>
<dbReference type="TreeFam" id="TF351563"/>
<dbReference type="BioGRID-ORCS" id="71682">
    <property type="hits" value="10 hits in 80 CRISPR screens"/>
</dbReference>
<dbReference type="ChiTaRS" id="Wdr27">
    <property type="organism name" value="mouse"/>
</dbReference>
<dbReference type="PRO" id="PR:Q8C5V5"/>
<dbReference type="Proteomes" id="UP000000589">
    <property type="component" value="Chromosome 17"/>
</dbReference>
<dbReference type="RNAct" id="Q8C5V5">
    <property type="molecule type" value="protein"/>
</dbReference>
<dbReference type="Bgee" id="ENSMUSG00000046991">
    <property type="expression patterns" value="Expressed in spermatid and 64 other cell types or tissues"/>
</dbReference>
<dbReference type="ExpressionAtlas" id="Q8C5V5">
    <property type="expression patterns" value="baseline and differential"/>
</dbReference>
<dbReference type="FunFam" id="2.130.10.10:FF:001315">
    <property type="entry name" value="WD repeat domain 27"/>
    <property type="match status" value="1"/>
</dbReference>
<dbReference type="FunFam" id="2.130.10.10:FF:003177">
    <property type="entry name" value="WD repeat domain 27"/>
    <property type="match status" value="1"/>
</dbReference>
<dbReference type="Gene3D" id="2.130.10.10">
    <property type="entry name" value="YVTN repeat-like/Quinoprotein amine dehydrogenase"/>
    <property type="match status" value="3"/>
</dbReference>
<dbReference type="InterPro" id="IPR011047">
    <property type="entry name" value="Quinoprotein_ADH-like_sf"/>
</dbReference>
<dbReference type="InterPro" id="IPR015943">
    <property type="entry name" value="WD40/YVTN_repeat-like_dom_sf"/>
</dbReference>
<dbReference type="InterPro" id="IPR036322">
    <property type="entry name" value="WD40_repeat_dom_sf"/>
</dbReference>
<dbReference type="InterPro" id="IPR001680">
    <property type="entry name" value="WD40_rpt"/>
</dbReference>
<dbReference type="InterPro" id="IPR042411">
    <property type="entry name" value="WDR27"/>
</dbReference>
<dbReference type="PANTHER" id="PTHR44525">
    <property type="entry name" value="WD REPEAT-CONTAINING PROTEIN 27"/>
    <property type="match status" value="1"/>
</dbReference>
<dbReference type="PANTHER" id="PTHR44525:SF1">
    <property type="entry name" value="WD REPEAT-CONTAINING PROTEIN 27"/>
    <property type="match status" value="1"/>
</dbReference>
<dbReference type="Pfam" id="PF00400">
    <property type="entry name" value="WD40"/>
    <property type="match status" value="2"/>
</dbReference>
<dbReference type="SMART" id="SM00320">
    <property type="entry name" value="WD40"/>
    <property type="match status" value="8"/>
</dbReference>
<dbReference type="SUPFAM" id="SSF50998">
    <property type="entry name" value="Quinoprotein alcohol dehydrogenase-like"/>
    <property type="match status" value="1"/>
</dbReference>
<dbReference type="SUPFAM" id="SSF50978">
    <property type="entry name" value="WD40 repeat-like"/>
    <property type="match status" value="1"/>
</dbReference>
<dbReference type="PROSITE" id="PS50082">
    <property type="entry name" value="WD_REPEATS_2"/>
    <property type="match status" value="2"/>
</dbReference>
<dbReference type="PROSITE" id="PS50294">
    <property type="entry name" value="WD_REPEATS_REGION"/>
    <property type="match status" value="2"/>
</dbReference>
<accession>Q8C5V5</accession>
<accession>Q8CA00</accession>
<feature type="chain" id="PRO_0000306832" description="WD repeat-containing protein 27">
    <location>
        <begin position="1"/>
        <end position="780"/>
    </location>
</feature>
<feature type="repeat" description="WD 1">
    <location>
        <begin position="3"/>
        <end position="56"/>
    </location>
</feature>
<feature type="repeat" description="WD 2">
    <location>
        <begin position="61"/>
        <end position="100"/>
    </location>
</feature>
<feature type="repeat" description="WD 3">
    <location>
        <begin position="111"/>
        <end position="150"/>
    </location>
</feature>
<feature type="repeat" description="WD 4">
    <location>
        <begin position="154"/>
        <end position="193"/>
    </location>
</feature>
<feature type="repeat" description="WD 5">
    <location>
        <begin position="200"/>
        <end position="236"/>
    </location>
</feature>
<feature type="repeat" description="WD 6">
    <location>
        <begin position="291"/>
        <end position="335"/>
    </location>
</feature>
<feature type="repeat" description="WD 7">
    <location>
        <begin position="342"/>
        <end position="385"/>
    </location>
</feature>
<feature type="repeat" description="WD 8">
    <location>
        <begin position="500"/>
        <end position="540"/>
    </location>
</feature>
<feature type="repeat" description="WD 9">
    <location>
        <begin position="544"/>
        <end position="582"/>
    </location>
</feature>
<feature type="repeat" description="WD 10">
    <location>
        <begin position="588"/>
        <end position="639"/>
    </location>
</feature>
<feature type="repeat" description="WD 11">
    <location>
        <begin position="644"/>
        <end position="685"/>
    </location>
</feature>
<feature type="repeat" description="WD 12">
    <location>
        <begin position="691"/>
        <end position="738"/>
    </location>
</feature>
<feature type="repeat" description="WD 13">
    <location>
        <begin position="752"/>
        <end position="779"/>
    </location>
</feature>
<proteinExistence type="evidence at transcript level"/>
<protein>
    <recommendedName>
        <fullName>WD repeat-containing protein 27</fullName>
    </recommendedName>
</protein>
<name>WDR27_MOUSE</name>